<name>MATK_TRISU</name>
<evidence type="ECO:0000255" key="1">
    <source>
        <dbReference type="HAMAP-Rule" id="MF_01390"/>
    </source>
</evidence>
<evidence type="ECO:0000305" key="2"/>
<geneLocation type="chloroplast"/>
<proteinExistence type="inferred from homology"/>
<keyword id="KW-0150">Chloroplast</keyword>
<keyword id="KW-0507">mRNA processing</keyword>
<keyword id="KW-0934">Plastid</keyword>
<keyword id="KW-0694">RNA-binding</keyword>
<keyword id="KW-0819">tRNA processing</keyword>
<gene>
    <name evidence="1" type="primary">matK</name>
</gene>
<organism>
    <name type="scientific">Trifolium subterraneum</name>
    <name type="common">Subterranean clover</name>
    <dbReference type="NCBI Taxonomy" id="3900"/>
    <lineage>
        <taxon>Eukaryota</taxon>
        <taxon>Viridiplantae</taxon>
        <taxon>Streptophyta</taxon>
        <taxon>Embryophyta</taxon>
        <taxon>Tracheophyta</taxon>
        <taxon>Spermatophyta</taxon>
        <taxon>Magnoliopsida</taxon>
        <taxon>eudicotyledons</taxon>
        <taxon>Gunneridae</taxon>
        <taxon>Pentapetalae</taxon>
        <taxon>rosids</taxon>
        <taxon>fabids</taxon>
        <taxon>Fabales</taxon>
        <taxon>Fabaceae</taxon>
        <taxon>Papilionoideae</taxon>
        <taxon>50 kb inversion clade</taxon>
        <taxon>NPAAA clade</taxon>
        <taxon>Hologalegina</taxon>
        <taxon>IRL clade</taxon>
        <taxon>Trifolieae</taxon>
        <taxon>Trifolium</taxon>
    </lineage>
</organism>
<feature type="chain" id="PRO_0000143756" description="Maturase K">
    <location>
        <begin position="1"/>
        <end position="506"/>
    </location>
</feature>
<feature type="sequence conflict" description="In Ref. 1; AAM82127." evidence="2" ref="1">
    <original>S</original>
    <variation>F</variation>
    <location>
        <position position="413"/>
    </location>
</feature>
<reference key="1">
    <citation type="book" date="2003" name="Advances in legume systematics - part 10">
        <title>Phylogenetic analyses of tribes Trifolieae and Vicieae based on sequences of the plastid gene matK (Papilionoideae: Leguminosae).</title>
        <editorList>
            <person name="Klitgaard B.B."/>
            <person name="Bruneau A."/>
        </editorList>
        <authorList>
            <person name="Steele K.P."/>
            <person name="Wojciechowski M.F."/>
        </authorList>
    </citation>
    <scope>NUCLEOTIDE SEQUENCE [GENOMIC DNA]</scope>
</reference>
<reference key="2">
    <citation type="journal article" date="2008" name="J. Mol. Evol.">
        <title>Extensive reorganization of the plastid genome of Trifolium subterraneum (Fabaceae) is associated with numerous repeated sequences and novel DNA insertions.</title>
        <authorList>
            <person name="Cai Z."/>
            <person name="Guisinger M."/>
            <person name="Kim H.-G."/>
            <person name="Ruck E."/>
            <person name="Blazier J.C."/>
            <person name="McMurtry V."/>
            <person name="Kuehl J.V."/>
            <person name="Boore J."/>
            <person name="Jansen R.K."/>
        </authorList>
    </citation>
    <scope>NUCLEOTIDE SEQUENCE [LARGE SCALE GENOMIC DNA]</scope>
</reference>
<comment type="function">
    <text evidence="1">Usually encoded in the trnK tRNA gene intron. Probably assists in splicing its own and other chloroplast group II introns.</text>
</comment>
<comment type="subcellular location">
    <subcellularLocation>
        <location>Plastid</location>
        <location>Chloroplast</location>
    </subcellularLocation>
</comment>
<comment type="similarity">
    <text evidence="1">Belongs to the intron maturase 2 family. MatK subfamily.</text>
</comment>
<dbReference type="EMBL" id="AF522135">
    <property type="protein sequence ID" value="AAM82127.1"/>
    <property type="molecule type" value="Genomic_DNA"/>
</dbReference>
<dbReference type="EMBL" id="EU849487">
    <property type="protein sequence ID" value="ACF20585.1"/>
    <property type="molecule type" value="Genomic_DNA"/>
</dbReference>
<dbReference type="RefSeq" id="YP_002456504.1">
    <property type="nucleotide sequence ID" value="NC_011828.1"/>
</dbReference>
<dbReference type="GeneID" id="7256653"/>
<dbReference type="GO" id="GO:0009507">
    <property type="term" value="C:chloroplast"/>
    <property type="evidence" value="ECO:0007669"/>
    <property type="project" value="UniProtKB-SubCell"/>
</dbReference>
<dbReference type="GO" id="GO:0003723">
    <property type="term" value="F:RNA binding"/>
    <property type="evidence" value="ECO:0007669"/>
    <property type="project" value="UniProtKB-KW"/>
</dbReference>
<dbReference type="GO" id="GO:0006397">
    <property type="term" value="P:mRNA processing"/>
    <property type="evidence" value="ECO:0007669"/>
    <property type="project" value="UniProtKB-KW"/>
</dbReference>
<dbReference type="GO" id="GO:0008380">
    <property type="term" value="P:RNA splicing"/>
    <property type="evidence" value="ECO:0007669"/>
    <property type="project" value="UniProtKB-UniRule"/>
</dbReference>
<dbReference type="GO" id="GO:0008033">
    <property type="term" value="P:tRNA processing"/>
    <property type="evidence" value="ECO:0007669"/>
    <property type="project" value="UniProtKB-KW"/>
</dbReference>
<dbReference type="HAMAP" id="MF_01390">
    <property type="entry name" value="MatK"/>
    <property type="match status" value="1"/>
</dbReference>
<dbReference type="InterPro" id="IPR024937">
    <property type="entry name" value="Domain_X"/>
</dbReference>
<dbReference type="InterPro" id="IPR002866">
    <property type="entry name" value="Maturase_MatK"/>
</dbReference>
<dbReference type="InterPro" id="IPR024942">
    <property type="entry name" value="Maturase_MatK_N"/>
</dbReference>
<dbReference type="PANTHER" id="PTHR34811">
    <property type="entry name" value="MATURASE K"/>
    <property type="match status" value="1"/>
</dbReference>
<dbReference type="PANTHER" id="PTHR34811:SF1">
    <property type="entry name" value="MATURASE K"/>
    <property type="match status" value="1"/>
</dbReference>
<dbReference type="Pfam" id="PF01348">
    <property type="entry name" value="Intron_maturas2"/>
    <property type="match status" value="1"/>
</dbReference>
<dbReference type="Pfam" id="PF01824">
    <property type="entry name" value="MatK_N"/>
    <property type="match status" value="1"/>
</dbReference>
<accession>Q8MCM0</accession>
<accession>B8R4D3</accession>
<sequence length="506" mass="61094">MKEYQVYLERARSRQQDFLYPLIFREYIYGLAYSHNWNRSIFVENGGYDNKYSLLNVKRLITRMYQQNHLIISANDSNKNPFLGYNKNFYSKIISEGFAIVVEIPLFLQLSSSLEEAEIIKSYKNVRSIHSIFPFLEDKFTYLNYVSDIRIPYPIHLEILVQILRYWVKDAPFFHLLRLFLYHFCNWNRFITTKKSISTFSKSNPRLFLFLYNFYVCEYESIFLFLRNKSSHLRFKSFSVFLERIFFYAKREHLVEVFSKDFSYPLPFFKDPNIHYVRYQGKCILASKNVPFLMNKWKHYFIHLWQCFFDVWSQPRTININQLSEHSFQLLGYFSNVRLNRSVVRSQMLQNTFLIEIVSKKLDIIVPIIPLIRSLAKAKFCNVLGHPISKPVWADSSDFDIMERFLRICRNLSHYYNGSSKKKSLYRIKYILRLSCIKTLACKHKSTTRAFLKRSGSEELLEEFFTEEEEILSLIFPRDSFTLRRFYRNRIWYLDILFRNDLVNDE</sequence>
<protein>
    <recommendedName>
        <fullName evidence="1">Maturase K</fullName>
    </recommendedName>
    <alternativeName>
        <fullName evidence="1">Intron maturase</fullName>
    </alternativeName>
</protein>